<comment type="function">
    <text evidence="1">Cell division inhibitor that blocks the formation of polar Z ring septums. Rapidly oscillates between the poles of the cell to destabilize FtsZ filaments that have formed before they mature into polar Z rings. Prevents FtsZ polymerization.</text>
</comment>
<comment type="subunit">
    <text evidence="1">Interacts with MinD and FtsZ.</text>
</comment>
<comment type="similarity">
    <text evidence="1">Belongs to the MinC family.</text>
</comment>
<organism>
    <name type="scientific">Salmonella enteritidis PT4 (strain P125109)</name>
    <dbReference type="NCBI Taxonomy" id="550537"/>
    <lineage>
        <taxon>Bacteria</taxon>
        <taxon>Pseudomonadati</taxon>
        <taxon>Pseudomonadota</taxon>
        <taxon>Gammaproteobacteria</taxon>
        <taxon>Enterobacterales</taxon>
        <taxon>Enterobacteriaceae</taxon>
        <taxon>Salmonella</taxon>
    </lineage>
</organism>
<sequence>MSNTPIELKGSSFTLSVVHLHEAEPEVIRQALEDKIAQAPAFLKHAPVVINVSGLESPVNWPELHKIVTSTGLRIIGVSGCKDTSLKVEIDRMGLPLLTEGKEKAVRPAPVEPATPSEPPQNANPITKTRLIDVPVRSGQRIYAPQCDLIVTSHVSAGAELIADGNIHVYGMMRGRALAGASGDREAQIFCTHLTAELVSIAGVYWLSDKIPAEFYGKAARLRLADNALTVQPLN</sequence>
<reference key="1">
    <citation type="journal article" date="2008" name="Genome Res.">
        <title>Comparative genome analysis of Salmonella enteritidis PT4 and Salmonella gallinarum 287/91 provides insights into evolutionary and host adaptation pathways.</title>
        <authorList>
            <person name="Thomson N.R."/>
            <person name="Clayton D.J."/>
            <person name="Windhorst D."/>
            <person name="Vernikos G."/>
            <person name="Davidson S."/>
            <person name="Churcher C."/>
            <person name="Quail M.A."/>
            <person name="Stevens M."/>
            <person name="Jones M.A."/>
            <person name="Watson M."/>
            <person name="Barron A."/>
            <person name="Layton A."/>
            <person name="Pickard D."/>
            <person name="Kingsley R.A."/>
            <person name="Bignell A."/>
            <person name="Clark L."/>
            <person name="Harris B."/>
            <person name="Ormond D."/>
            <person name="Abdellah Z."/>
            <person name="Brooks K."/>
            <person name="Cherevach I."/>
            <person name="Chillingworth T."/>
            <person name="Woodward J."/>
            <person name="Norberczak H."/>
            <person name="Lord A."/>
            <person name="Arrowsmith C."/>
            <person name="Jagels K."/>
            <person name="Moule S."/>
            <person name="Mungall K."/>
            <person name="Saunders M."/>
            <person name="Whitehead S."/>
            <person name="Chabalgoity J.A."/>
            <person name="Maskell D."/>
            <person name="Humphreys T."/>
            <person name="Roberts M."/>
            <person name="Barrow P.A."/>
            <person name="Dougan G."/>
            <person name="Parkhill J."/>
        </authorList>
    </citation>
    <scope>NUCLEOTIDE SEQUENCE [LARGE SCALE GENOMIC DNA]</scope>
    <source>
        <strain>P125109</strain>
    </source>
</reference>
<gene>
    <name evidence="1" type="primary">minC</name>
    <name type="ordered locus">SEN1223</name>
</gene>
<keyword id="KW-0131">Cell cycle</keyword>
<keyword id="KW-0132">Cell division</keyword>
<keyword id="KW-0717">Septation</keyword>
<evidence type="ECO:0000255" key="1">
    <source>
        <dbReference type="HAMAP-Rule" id="MF_00267"/>
    </source>
</evidence>
<evidence type="ECO:0000256" key="2">
    <source>
        <dbReference type="SAM" id="MobiDB-lite"/>
    </source>
</evidence>
<name>MINC_SALEP</name>
<dbReference type="EMBL" id="AM933172">
    <property type="protein sequence ID" value="CAR32803.1"/>
    <property type="molecule type" value="Genomic_DNA"/>
</dbReference>
<dbReference type="RefSeq" id="WP_000072528.1">
    <property type="nucleotide sequence ID" value="NC_011294.1"/>
</dbReference>
<dbReference type="SMR" id="B5R2V6"/>
<dbReference type="KEGG" id="set:SEN1223"/>
<dbReference type="HOGENOM" id="CLU_067812_0_1_6"/>
<dbReference type="Proteomes" id="UP000000613">
    <property type="component" value="Chromosome"/>
</dbReference>
<dbReference type="GO" id="GO:0000902">
    <property type="term" value="P:cell morphogenesis"/>
    <property type="evidence" value="ECO:0007669"/>
    <property type="project" value="InterPro"/>
</dbReference>
<dbReference type="GO" id="GO:0000917">
    <property type="term" value="P:division septum assembly"/>
    <property type="evidence" value="ECO:0007669"/>
    <property type="project" value="UniProtKB-KW"/>
</dbReference>
<dbReference type="GO" id="GO:0051302">
    <property type="term" value="P:regulation of cell division"/>
    <property type="evidence" value="ECO:0007669"/>
    <property type="project" value="InterPro"/>
</dbReference>
<dbReference type="GO" id="GO:1901891">
    <property type="term" value="P:regulation of cell septum assembly"/>
    <property type="evidence" value="ECO:0007669"/>
    <property type="project" value="InterPro"/>
</dbReference>
<dbReference type="FunFam" id="2.160.20.70:FF:000002">
    <property type="entry name" value="Probable septum site-determining protein MinC"/>
    <property type="match status" value="1"/>
</dbReference>
<dbReference type="Gene3D" id="2.160.20.70">
    <property type="match status" value="1"/>
</dbReference>
<dbReference type="Gene3D" id="3.30.70.260">
    <property type="match status" value="1"/>
</dbReference>
<dbReference type="HAMAP" id="MF_00267">
    <property type="entry name" value="MinC"/>
    <property type="match status" value="1"/>
</dbReference>
<dbReference type="InterPro" id="IPR016098">
    <property type="entry name" value="CAP/MinC_C"/>
</dbReference>
<dbReference type="InterPro" id="IPR013033">
    <property type="entry name" value="MinC"/>
</dbReference>
<dbReference type="InterPro" id="IPR036145">
    <property type="entry name" value="MinC_C_sf"/>
</dbReference>
<dbReference type="InterPro" id="IPR007874">
    <property type="entry name" value="MinC_N"/>
</dbReference>
<dbReference type="InterPro" id="IPR005526">
    <property type="entry name" value="Septum_form_inhib_MinC_C"/>
</dbReference>
<dbReference type="NCBIfam" id="TIGR01222">
    <property type="entry name" value="minC"/>
    <property type="match status" value="1"/>
</dbReference>
<dbReference type="PANTHER" id="PTHR34108">
    <property type="entry name" value="SEPTUM SITE-DETERMINING PROTEIN MINC"/>
    <property type="match status" value="1"/>
</dbReference>
<dbReference type="PANTHER" id="PTHR34108:SF1">
    <property type="entry name" value="SEPTUM SITE-DETERMINING PROTEIN MINC"/>
    <property type="match status" value="1"/>
</dbReference>
<dbReference type="Pfam" id="PF03775">
    <property type="entry name" value="MinC_C"/>
    <property type="match status" value="1"/>
</dbReference>
<dbReference type="Pfam" id="PF05209">
    <property type="entry name" value="MinC_N"/>
    <property type="match status" value="1"/>
</dbReference>
<dbReference type="SUPFAM" id="SSF63848">
    <property type="entry name" value="Cell-division inhibitor MinC, C-terminal domain"/>
    <property type="match status" value="1"/>
</dbReference>
<proteinExistence type="inferred from homology"/>
<accession>B5R2V6</accession>
<feature type="chain" id="PRO_1000114289" description="Probable septum site-determining protein MinC">
    <location>
        <begin position="1"/>
        <end position="235"/>
    </location>
</feature>
<feature type="region of interest" description="Disordered" evidence="2">
    <location>
        <begin position="104"/>
        <end position="125"/>
    </location>
</feature>
<feature type="compositionally biased region" description="Pro residues" evidence="2">
    <location>
        <begin position="110"/>
        <end position="119"/>
    </location>
</feature>
<protein>
    <recommendedName>
        <fullName evidence="1">Probable septum site-determining protein MinC</fullName>
    </recommendedName>
</protein>